<comment type="catalytic activity">
    <reaction evidence="1">
        <text>uridine + ATP = UMP + ADP + H(+)</text>
        <dbReference type="Rhea" id="RHEA:16825"/>
        <dbReference type="ChEBI" id="CHEBI:15378"/>
        <dbReference type="ChEBI" id="CHEBI:16704"/>
        <dbReference type="ChEBI" id="CHEBI:30616"/>
        <dbReference type="ChEBI" id="CHEBI:57865"/>
        <dbReference type="ChEBI" id="CHEBI:456216"/>
        <dbReference type="EC" id="2.7.1.48"/>
    </reaction>
</comment>
<comment type="catalytic activity">
    <reaction evidence="1">
        <text>cytidine + ATP = CMP + ADP + H(+)</text>
        <dbReference type="Rhea" id="RHEA:24674"/>
        <dbReference type="ChEBI" id="CHEBI:15378"/>
        <dbReference type="ChEBI" id="CHEBI:17562"/>
        <dbReference type="ChEBI" id="CHEBI:30616"/>
        <dbReference type="ChEBI" id="CHEBI:60377"/>
        <dbReference type="ChEBI" id="CHEBI:456216"/>
        <dbReference type="EC" id="2.7.1.48"/>
    </reaction>
</comment>
<comment type="pathway">
    <text evidence="1">Pyrimidine metabolism; CTP biosynthesis via salvage pathway; CTP from cytidine: step 1/3.</text>
</comment>
<comment type="pathway">
    <text evidence="1">Pyrimidine metabolism; UMP biosynthesis via salvage pathway; UMP from uridine: step 1/1.</text>
</comment>
<comment type="subcellular location">
    <subcellularLocation>
        <location evidence="1">Cytoplasm</location>
    </subcellularLocation>
</comment>
<comment type="similarity">
    <text evidence="1">Belongs to the uridine kinase family.</text>
</comment>
<reference key="1">
    <citation type="journal article" date="2006" name="Genome Res.">
        <title>Massive genome erosion and functional adaptations provide insights into the symbiotic lifestyle of Sodalis glossinidius in the tsetse host.</title>
        <authorList>
            <person name="Toh H."/>
            <person name="Weiss B.L."/>
            <person name="Perkin S.A.H."/>
            <person name="Yamashita A."/>
            <person name="Oshima K."/>
            <person name="Hattori M."/>
            <person name="Aksoy S."/>
        </authorList>
    </citation>
    <scope>NUCLEOTIDE SEQUENCE [LARGE SCALE GENOMIC DNA]</scope>
    <source>
        <strain>morsitans</strain>
    </source>
</reference>
<feature type="chain" id="PRO_1000017900" description="Uridine kinase">
    <location>
        <begin position="1"/>
        <end position="213"/>
    </location>
</feature>
<feature type="binding site" evidence="1">
    <location>
        <begin position="15"/>
        <end position="22"/>
    </location>
    <ligand>
        <name>ATP</name>
        <dbReference type="ChEBI" id="CHEBI:30616"/>
    </ligand>
</feature>
<evidence type="ECO:0000255" key="1">
    <source>
        <dbReference type="HAMAP-Rule" id="MF_00551"/>
    </source>
</evidence>
<accession>Q2NUC7</accession>
<protein>
    <recommendedName>
        <fullName evidence="1">Uridine kinase</fullName>
        <ecNumber evidence="1">2.7.1.48</ecNumber>
    </recommendedName>
    <alternativeName>
        <fullName evidence="1">Cytidine monophosphokinase</fullName>
    </alternativeName>
    <alternativeName>
        <fullName evidence="1">Uridine monophosphokinase</fullName>
    </alternativeName>
</protein>
<dbReference type="EC" id="2.7.1.48" evidence="1"/>
<dbReference type="EMBL" id="AP008232">
    <property type="protein sequence ID" value="BAE74248.1"/>
    <property type="molecule type" value="Genomic_DNA"/>
</dbReference>
<dbReference type="RefSeq" id="WP_011410834.1">
    <property type="nucleotide sequence ID" value="NC_007712.1"/>
</dbReference>
<dbReference type="SMR" id="Q2NUC7"/>
<dbReference type="STRING" id="343509.SG0973"/>
<dbReference type="KEGG" id="sgl:SG0973"/>
<dbReference type="eggNOG" id="COG0572">
    <property type="taxonomic scope" value="Bacteria"/>
</dbReference>
<dbReference type="HOGENOM" id="CLU_021278_1_2_6"/>
<dbReference type="OrthoDB" id="9777642at2"/>
<dbReference type="BioCyc" id="SGLO343509:SGP1_RS08375-MONOMER"/>
<dbReference type="UniPathway" id="UPA00574">
    <property type="reaction ID" value="UER00637"/>
</dbReference>
<dbReference type="UniPathway" id="UPA00579">
    <property type="reaction ID" value="UER00640"/>
</dbReference>
<dbReference type="Proteomes" id="UP000001932">
    <property type="component" value="Chromosome"/>
</dbReference>
<dbReference type="GO" id="GO:0005737">
    <property type="term" value="C:cytoplasm"/>
    <property type="evidence" value="ECO:0007669"/>
    <property type="project" value="UniProtKB-SubCell"/>
</dbReference>
<dbReference type="GO" id="GO:0005524">
    <property type="term" value="F:ATP binding"/>
    <property type="evidence" value="ECO:0007669"/>
    <property type="project" value="UniProtKB-UniRule"/>
</dbReference>
<dbReference type="GO" id="GO:0043771">
    <property type="term" value="F:cytidine kinase activity"/>
    <property type="evidence" value="ECO:0007669"/>
    <property type="project" value="RHEA"/>
</dbReference>
<dbReference type="GO" id="GO:0004849">
    <property type="term" value="F:uridine kinase activity"/>
    <property type="evidence" value="ECO:0007669"/>
    <property type="project" value="UniProtKB-UniRule"/>
</dbReference>
<dbReference type="GO" id="GO:0044211">
    <property type="term" value="P:CTP salvage"/>
    <property type="evidence" value="ECO:0007669"/>
    <property type="project" value="UniProtKB-UniRule"/>
</dbReference>
<dbReference type="GO" id="GO:0044206">
    <property type="term" value="P:UMP salvage"/>
    <property type="evidence" value="ECO:0007669"/>
    <property type="project" value="UniProtKB-UniRule"/>
</dbReference>
<dbReference type="CDD" id="cd02023">
    <property type="entry name" value="UMPK"/>
    <property type="match status" value="1"/>
</dbReference>
<dbReference type="Gene3D" id="3.40.50.300">
    <property type="entry name" value="P-loop containing nucleotide triphosphate hydrolases"/>
    <property type="match status" value="1"/>
</dbReference>
<dbReference type="HAMAP" id="MF_00551">
    <property type="entry name" value="Uridine_kinase"/>
    <property type="match status" value="1"/>
</dbReference>
<dbReference type="InterPro" id="IPR027417">
    <property type="entry name" value="P-loop_NTPase"/>
</dbReference>
<dbReference type="InterPro" id="IPR006083">
    <property type="entry name" value="PRK/URK"/>
</dbReference>
<dbReference type="InterPro" id="IPR026008">
    <property type="entry name" value="Uridine_kinase"/>
</dbReference>
<dbReference type="InterPro" id="IPR000764">
    <property type="entry name" value="Uridine_kinase-like"/>
</dbReference>
<dbReference type="NCBIfam" id="NF004018">
    <property type="entry name" value="PRK05480.1"/>
    <property type="match status" value="1"/>
</dbReference>
<dbReference type="NCBIfam" id="TIGR00235">
    <property type="entry name" value="udk"/>
    <property type="match status" value="1"/>
</dbReference>
<dbReference type="PANTHER" id="PTHR10285">
    <property type="entry name" value="URIDINE KINASE"/>
    <property type="match status" value="1"/>
</dbReference>
<dbReference type="Pfam" id="PF00485">
    <property type="entry name" value="PRK"/>
    <property type="match status" value="1"/>
</dbReference>
<dbReference type="PRINTS" id="PR00988">
    <property type="entry name" value="URIDINKINASE"/>
</dbReference>
<dbReference type="SUPFAM" id="SSF52540">
    <property type="entry name" value="P-loop containing nucleoside triphosphate hydrolases"/>
    <property type="match status" value="1"/>
</dbReference>
<organism>
    <name type="scientific">Sodalis glossinidius (strain morsitans)</name>
    <dbReference type="NCBI Taxonomy" id="343509"/>
    <lineage>
        <taxon>Bacteria</taxon>
        <taxon>Pseudomonadati</taxon>
        <taxon>Pseudomonadota</taxon>
        <taxon>Gammaproteobacteria</taxon>
        <taxon>Enterobacterales</taxon>
        <taxon>Bruguierivoracaceae</taxon>
        <taxon>Sodalis</taxon>
    </lineage>
</organism>
<proteinExistence type="inferred from homology"/>
<sequence>MTDKPHQCVIIGIAGASASGKSLIASTLYRELCYQVGDEHIGIISEGSYYKDQSGMTMTERVKTNYDHPSAMDHSLLFQYIQMLKAGLPIEMPVYSYVEHTRRPETLHLRPKKVIILEEILLLTDLRLRQEMNLSIFVDTPLDICLMRRMKRDVNERGRSMDSVIGEYQRTVRPMFLQFIEPSKQYADIIVPRGGKNRIAIDILKAKISQFFE</sequence>
<keyword id="KW-0067">ATP-binding</keyword>
<keyword id="KW-0963">Cytoplasm</keyword>
<keyword id="KW-0418">Kinase</keyword>
<keyword id="KW-0547">Nucleotide-binding</keyword>
<keyword id="KW-0808">Transferase</keyword>
<name>URK_SODGM</name>
<gene>
    <name evidence="1" type="primary">udk</name>
    <name type="ordered locus">SG0973</name>
</gene>